<dbReference type="EMBL" id="J02459">
    <property type="protein sequence ID" value="AAA96582.1"/>
    <property type="molecule type" value="Genomic_DNA"/>
</dbReference>
<dbReference type="PIR" id="B94614">
    <property type="entry name" value="RCBPL"/>
</dbReference>
<dbReference type="RefSeq" id="NP_040629.1">
    <property type="nucleotide sequence ID" value="NC_001416.1"/>
</dbReference>
<dbReference type="PDB" id="1COP">
    <property type="method" value="NMR"/>
    <property type="chains" value="D/E=1-66"/>
</dbReference>
<dbReference type="PDB" id="1D1L">
    <property type="method" value="X-ray"/>
    <property type="resolution" value="2.10 A"/>
    <property type="chains" value="A=1-61"/>
</dbReference>
<dbReference type="PDB" id="1D1M">
    <property type="method" value="X-ray"/>
    <property type="resolution" value="2.05 A"/>
    <property type="chains" value="A/B=1-60"/>
</dbReference>
<dbReference type="PDB" id="1ORC">
    <property type="method" value="X-ray"/>
    <property type="resolution" value="1.54 A"/>
    <property type="chains" value="A=1-66"/>
</dbReference>
<dbReference type="PDB" id="2A63">
    <property type="method" value="NMR"/>
    <property type="chains" value="A=1-66"/>
</dbReference>
<dbReference type="PDB" id="2ECS">
    <property type="method" value="X-ray"/>
    <property type="resolution" value="1.40 A"/>
    <property type="chains" value="A/B=1-66"/>
</dbReference>
<dbReference type="PDB" id="2ORC">
    <property type="method" value="NMR"/>
    <property type="chains" value="A=1-66"/>
</dbReference>
<dbReference type="PDB" id="2OVG">
    <property type="method" value="X-ray"/>
    <property type="resolution" value="1.35 A"/>
    <property type="chains" value="A=1-66"/>
</dbReference>
<dbReference type="PDB" id="3ORC">
    <property type="method" value="X-ray"/>
    <property type="resolution" value="3.00 A"/>
    <property type="chains" value="A=2-61"/>
</dbReference>
<dbReference type="PDB" id="4CRO">
    <property type="method" value="X-ray"/>
    <property type="resolution" value="3.90 A"/>
    <property type="chains" value="A/B/C/D/E/F=1-66"/>
</dbReference>
<dbReference type="PDB" id="5CRO">
    <property type="method" value="X-ray"/>
    <property type="resolution" value="2.30 A"/>
    <property type="chains" value="A/B/C/O=1-66"/>
</dbReference>
<dbReference type="PDB" id="6CRO">
    <property type="method" value="X-ray"/>
    <property type="resolution" value="3.00 A"/>
    <property type="chains" value="A=2-61"/>
</dbReference>
<dbReference type="PDBsum" id="1COP"/>
<dbReference type="PDBsum" id="1D1L"/>
<dbReference type="PDBsum" id="1D1M"/>
<dbReference type="PDBsum" id="1ORC"/>
<dbReference type="PDBsum" id="2A63"/>
<dbReference type="PDBsum" id="2ECS"/>
<dbReference type="PDBsum" id="2ORC"/>
<dbReference type="PDBsum" id="2OVG"/>
<dbReference type="PDBsum" id="3ORC"/>
<dbReference type="PDBsum" id="4CRO"/>
<dbReference type="PDBsum" id="5CRO"/>
<dbReference type="PDBsum" id="6CRO"/>
<dbReference type="BMRB" id="P03040"/>
<dbReference type="SMR" id="P03040"/>
<dbReference type="IntAct" id="P03040">
    <property type="interactions" value="1"/>
</dbReference>
<dbReference type="GeneID" id="2703491"/>
<dbReference type="KEGG" id="vg:2703467"/>
<dbReference type="EvolutionaryTrace" id="P03040"/>
<dbReference type="Proteomes" id="UP000001711">
    <property type="component" value="Genome"/>
</dbReference>
<dbReference type="GO" id="GO:0001046">
    <property type="term" value="F:core promoter sequence-specific DNA binding"/>
    <property type="evidence" value="ECO:0000314"/>
    <property type="project" value="CAFA"/>
</dbReference>
<dbReference type="GO" id="GO:0003677">
    <property type="term" value="F:DNA binding"/>
    <property type="evidence" value="ECO:0000314"/>
    <property type="project" value="CAFA"/>
</dbReference>
<dbReference type="GO" id="GO:0042803">
    <property type="term" value="F:protein homodimerization activity"/>
    <property type="evidence" value="ECO:0000314"/>
    <property type="project" value="CAFA"/>
</dbReference>
<dbReference type="GO" id="GO:0098689">
    <property type="term" value="P:latency-replication decision"/>
    <property type="evidence" value="ECO:0000314"/>
    <property type="project" value="UniProtKB"/>
</dbReference>
<dbReference type="GO" id="GO:0010944">
    <property type="term" value="P:negative regulation of transcription by competitive promoter binding"/>
    <property type="evidence" value="ECO:0000315"/>
    <property type="project" value="CAFA"/>
</dbReference>
<dbReference type="GO" id="GO:0032897">
    <property type="term" value="P:negative regulation of viral transcription"/>
    <property type="evidence" value="ECO:0000314"/>
    <property type="project" value="UniProtKB"/>
</dbReference>
<dbReference type="GO" id="GO:0019046">
    <property type="term" value="P:release from viral latency"/>
    <property type="evidence" value="ECO:0000315"/>
    <property type="project" value="CAFA"/>
</dbReference>
<dbReference type="GO" id="GO:0009411">
    <property type="term" value="P:response to UV"/>
    <property type="evidence" value="ECO:0000315"/>
    <property type="project" value="CAFA"/>
</dbReference>
<dbReference type="DisProt" id="DP00741"/>
<dbReference type="FunFam" id="3.30.240.10:FF:000001">
    <property type="entry name" value="Regulatory protein cro"/>
    <property type="match status" value="1"/>
</dbReference>
<dbReference type="Gene3D" id="3.30.240.10">
    <property type="entry name" value="CRO Repressor"/>
    <property type="match status" value="1"/>
</dbReference>
<dbReference type="InterPro" id="IPR000655">
    <property type="entry name" value="Cro-like"/>
</dbReference>
<dbReference type="InterPro" id="IPR038202">
    <property type="entry name" value="Cro_sf"/>
</dbReference>
<dbReference type="InterPro" id="IPR010982">
    <property type="entry name" value="Lambda_DNA-bd_dom_sf"/>
</dbReference>
<dbReference type="Pfam" id="PF09048">
    <property type="entry name" value="Cro"/>
    <property type="match status" value="1"/>
</dbReference>
<dbReference type="PIRSF" id="PIRSF003217">
    <property type="entry name" value="Cro_protein"/>
    <property type="match status" value="1"/>
</dbReference>
<dbReference type="PRINTS" id="PR00030">
    <property type="entry name" value="HTHCRO"/>
</dbReference>
<dbReference type="SUPFAM" id="SSF47413">
    <property type="entry name" value="lambda repressor-like DNA-binding domains"/>
    <property type="match status" value="1"/>
</dbReference>
<organismHost>
    <name type="scientific">Escherichia coli</name>
    <dbReference type="NCBI Taxonomy" id="562"/>
</organismHost>
<comment type="function">
    <text evidence="1 2 4 5">Plays an essential role in the switch from lysogenic to lytic state and in fine-tuning the lytic phase activation. Mediates the de-repression of the lytic promoters from repression by cI at an early stage of prophage induction. Turns down the expression of the transcriptional activator cII, a factor that initiates the expression of repressor cI, the major component promoting latency. Additionally, cro is able to directly bind to the promoter region of cI thereby preventing the transcription of cI repressor. These two mechanisms ultimately lead to a strong decrease in the amount of cI that will become unable to maintain the latent phase, allowing the transition to lytic growth. Low level of Cro also stimulates the lytic promoters while cI repressor is still present (PubMed:29158090). Cro-mediated up-regulation of pR and pL ultimately leads to its own increased expression and to a successful switch to lytic growth (PubMed:29158090). The second function assigned to Cro is the fine-tuning of the lytic phase activation. Indeed, cro initially diminishes the strength of activation by turning down the expression of lytic genes as well as its own expression.</text>
</comment>
<comment type="subunit">
    <text evidence="3">Binds DNA as a homodimer.</text>
</comment>
<proteinExistence type="evidence at protein level"/>
<keyword id="KW-0002">3D-structure</keyword>
<keyword id="KW-0903">Direct protein sequencing</keyword>
<keyword id="KW-0238">DNA-binding</keyword>
<keyword id="KW-0244">Early protein</keyword>
<keyword id="KW-1252">Latency-replication decision</keyword>
<keyword id="KW-1185">Reference proteome</keyword>
<keyword id="KW-0678">Repressor</keyword>
<keyword id="KW-0804">Transcription</keyword>
<keyword id="KW-0805">Transcription regulation</keyword>
<keyword id="KW-1251">Viral latency</keyword>
<keyword id="KW-1276">Viral latency initiation and maintenance</keyword>
<accession>P03040</accession>
<sequence length="66" mass="7363">MEQRITLKDYAMRFGQTKTAKDLGVYQSAINKAIHAGRKIFLTINADGSVYAEEVKPFPSNKKTTA</sequence>
<organism>
    <name type="scientific">Escherichia phage lambda</name>
    <name type="common">Bacteriophage lambda</name>
    <dbReference type="NCBI Taxonomy" id="2681611"/>
    <lineage>
        <taxon>Viruses</taxon>
        <taxon>Duplodnaviria</taxon>
        <taxon>Heunggongvirae</taxon>
        <taxon>Uroviricota</taxon>
        <taxon>Caudoviricetes</taxon>
        <taxon>Lambdavirus</taxon>
        <taxon>Lambdavirus lambda</taxon>
    </lineage>
</organism>
<gene>
    <name type="primary">cro</name>
    <name type="ordered locus">lambdap57</name>
</gene>
<evidence type="ECO:0000269" key="1">
    <source>
    </source>
</evidence>
<evidence type="ECO:0000269" key="2">
    <source>
    </source>
</evidence>
<evidence type="ECO:0000269" key="3">
    <source>
    </source>
</evidence>
<evidence type="ECO:0000269" key="4">
    <source>
    </source>
</evidence>
<evidence type="ECO:0000269" key="5">
    <source>
    </source>
</evidence>
<evidence type="ECO:0007744" key="6">
    <source>
        <dbReference type="PDB" id="1COP"/>
    </source>
</evidence>
<evidence type="ECO:0007744" key="7">
    <source>
        <dbReference type="PDB" id="2A63"/>
    </source>
</evidence>
<evidence type="ECO:0007744" key="8">
    <source>
        <dbReference type="PDB" id="2ECS"/>
    </source>
</evidence>
<evidence type="ECO:0007744" key="9">
    <source>
        <dbReference type="PDB" id="2OVG"/>
    </source>
</evidence>
<evidence type="ECO:0007829" key="10">
    <source>
        <dbReference type="PDB" id="2ECS"/>
    </source>
</evidence>
<evidence type="ECO:0007829" key="11">
    <source>
        <dbReference type="PDB" id="2OVG"/>
    </source>
</evidence>
<evidence type="ECO:0007829" key="12">
    <source>
        <dbReference type="PDB" id="3ORC"/>
    </source>
</evidence>
<reference key="1">
    <citation type="journal article" date="1982" name="J. Mol. Biol.">
        <title>Nucleotide sequence of bacteriophage lambda DNA.</title>
        <authorList>
            <person name="Sanger F."/>
            <person name="Coulson A.R."/>
            <person name="Hong G.F."/>
            <person name="Hill D.F."/>
            <person name="Petersen G.B."/>
        </authorList>
    </citation>
    <scope>NUCLEOTIDE SEQUENCE [LARGE SCALE GENOMIC DNA]</scope>
</reference>
<reference key="2">
    <citation type="journal article" date="1978" name="Nature">
        <title>Nucleotide sequence of cro, cII and part of the O gene in phage lambda DNA.</title>
        <authorList>
            <person name="Schwarz E."/>
            <person name="Scherer G."/>
            <person name="Hobom G."/>
            <person name="Koessel H."/>
        </authorList>
    </citation>
    <scope>NUCLEOTIDE SEQUENCE [GENOMIC DNA]</scope>
    <source>
        <strain>DVH93</strain>
    </source>
</reference>
<reference key="3">
    <citation type="journal article" date="1977" name="Nature">
        <title>Sequence of Cro gene of bacteriophage lambda.</title>
        <authorList>
            <person name="Roberts T.M."/>
            <person name="Shimatake H."/>
            <person name="Brady C."/>
            <person name="Rosenberg M."/>
        </authorList>
    </citation>
    <scope>NUCLEOTIDE SEQUENCE [GENOMIC DNA]</scope>
</reference>
<reference key="4">
    <citation type="journal article" date="1977" name="Nature">
        <title>Amino acid sequence of Cro regulatory protein of bacteriophage lambda.</title>
        <authorList>
            <person name="Hsiang M.W."/>
            <person name="Cole R.D."/>
            <person name="Takeda Y."/>
            <person name="Echols H."/>
        </authorList>
    </citation>
    <scope>PROTEIN SEQUENCE</scope>
</reference>
<reference key="5">
    <citation type="journal article" date="1976" name="Proc. Natl. Acad. Sci. U.S.A.">
        <title>Purification and properties of a DNA-binding protein with characteristics expected for the Cro protein of bacteriophage lambda, a repressor essential for lytic growth.</title>
        <authorList>
            <person name="Folkmanis A."/>
            <person name="Takeda Y."/>
            <person name="Simuth J."/>
            <person name="Gussin G."/>
            <person name="Echols H."/>
        </authorList>
    </citation>
    <scope>FUNCTION</scope>
</reference>
<reference key="6">
    <citation type="journal article" date="1981" name="Nature">
        <title>lambda Repressor and cro--components of an efficient molecular switch.</title>
        <authorList>
            <person name="Johnson A.D."/>
            <person name="Poteete A.R."/>
            <person name="Lauer G."/>
            <person name="Sauer R.T."/>
            <person name="Ackers G.K."/>
            <person name="Ptashne M."/>
        </authorList>
    </citation>
    <scope>FUNCTION</scope>
</reference>
<reference key="7">
    <citation type="journal article" date="2007" name="Genes Dev.">
        <title>Cro's role in the CI Cro bistable switch is critical for lambda's transition from lysogeny to lytic development.</title>
        <authorList>
            <person name="Schubert R.A."/>
            <person name="Dodd I.B."/>
            <person name="Egan J.B."/>
            <person name="Shearwin K.E."/>
        </authorList>
    </citation>
    <scope>FUNCTION</scope>
</reference>
<reference key="8">
    <citation type="journal article" date="2018" name="J. Mol. Biol.">
        <title>The Developmental Switch in Bacteriophage lambda: A Critical Role of the Cro Protein.</title>
        <authorList>
            <person name="Lee S."/>
            <person name="Lewis D.E.A."/>
            <person name="Adhya S."/>
        </authorList>
    </citation>
    <scope>FUNCTION</scope>
</reference>
<reference key="9">
    <citation type="journal article" date="1981" name="Nature">
        <title>Structure of the cro repressor from bacteriophage lambda and its interaction with DNA.</title>
        <authorList>
            <person name="Anderson W.F."/>
            <person name="Ohlendorf D.H."/>
            <person name="Takeda Y."/>
            <person name="Matthews B.W."/>
        </authorList>
    </citation>
    <scope>X-RAY CRYSTALLOGRAPHY (2.8 ANGSTROMS)</scope>
</reference>
<reference key="10">
    <citation type="journal article" date="1983" name="J. Mol. Biol.">
        <title>Comparison of the structures of cro and lambda repressor proteins from bacteriophage lambda.</title>
        <authorList>
            <person name="Ohlendorf D.H."/>
            <person name="Anderson W.F."/>
            <person name="Lewis M."/>
            <person name="Pabo C.O."/>
            <person name="Matthews B.W."/>
        </authorList>
    </citation>
    <scope>COMPARISON OF X-RAY STRUCTURES</scope>
</reference>
<reference key="11">
    <citation type="journal article" date="1990" name="Proc. Natl. Acad. Sci. U.S.A.">
        <title>Protein-DNA conformational changes in the crystal structure of a lambda Cro-operator complex.</title>
        <authorList>
            <person name="Brennan R.G."/>
            <person name="Roderick S.L."/>
            <person name="Takeda Y."/>
            <person name="Matthews B.W."/>
        </authorList>
    </citation>
    <scope>X-RAY CRYSTALLOGRAPHY (3.9 ANGSTROMS)</scope>
</reference>
<reference evidence="6" key="12">
    <citation type="journal article" date="1995" name="J. Mol. Biol.">
        <title>Three-dimensional dimer structure of the lambda-Cro repressor in solution as determined by heteronuclear multidimensional NMR.</title>
        <authorList>
            <person name="Matsuo H."/>
            <person name="Shirakawa M."/>
            <person name="Kyogoku Y."/>
        </authorList>
    </citation>
    <scope>STRUCTURE BY NMR</scope>
</reference>
<reference key="13">
    <citation type="journal article" date="1998" name="J. Mol. Biol.">
        <title>Refined structure of Cro repressor protein from bacteriophage lambda suggests both flexibility and plasticity.</title>
        <authorList>
            <person name="Ohlendorf D.H."/>
            <person name="Tronrud D.E."/>
            <person name="Matthews B.W."/>
        </authorList>
    </citation>
    <scope>X-RAY CRYSTALLOGRAPHY (2.3 ANGSTROMS)</scope>
</reference>
<reference key="14">
    <citation type="journal article" date="1998" name="J. Mol. Biol.">
        <title>Crystal structure of lambda-Cro bound to a consensus operator at 3.0 A resolution.</title>
        <authorList>
            <person name="Albright R.A."/>
            <person name="Matthews B.W."/>
        </authorList>
    </citation>
    <scope>X-RAY CRYSTALLOGRAPHY (3.0 ANGSTROMS)</scope>
</reference>
<reference key="15">
    <citation type="journal article" date="1998" name="Protein Sci.">
        <title>Crystal structure of an engineered Cro monomer bound nonspecifically to DNA: possible implications for nonspecific binding by the wild-type protein.</title>
        <authorList>
            <person name="Albright R.A."/>
            <person name="Mossing M.C."/>
            <person name="Matthews B.W."/>
        </authorList>
    </citation>
    <scope>X-RAY CRYSTALLOGRAPHY (3.0 ANGSTROMS)</scope>
</reference>
<reference key="16">
    <citation type="journal article" date="2000" name="J. Mol. Biol.">
        <title>The structural basis for enhanced stability and reduced DNA binding seen in engineered second-generation Cro monomers and dimers.</title>
        <authorList>
            <person name="Rupert P.B."/>
            <person name="Mollah A.K."/>
            <person name="Mossing M.C."/>
            <person name="Matthews B.W."/>
        </authorList>
    </citation>
    <scope>X-RAY CRYSTALLOGRAPHY (2.05 ANGSTROMS)</scope>
</reference>
<reference evidence="7" key="17">
    <citation type="journal article" date="2006" name="Biochemistry">
        <title>A trade between similar but nonequivalent intrasubunit and intersubunit contacts in Cro dimer evolution.</title>
        <authorList>
            <person name="Newlove T."/>
            <person name="Atkinson K.R."/>
            <person name="Van Dorn L.O."/>
            <person name="Cordes M.H."/>
        </authorList>
    </citation>
    <scope>STRUCTURE BY NMR</scope>
    <scope>MUTAGENESIS OF ALA-33 AND PHE-58</scope>
</reference>
<reference evidence="8 9" key="18">
    <citation type="journal article" date="2008" name="J. Mol. Biol.">
        <title>Two structures of a lambda Cro variant highlight dimer flexibility but disfavor major dimer distortions upon specific binding of cognate DNA.</title>
        <authorList>
            <person name="Hall B.M."/>
            <person name="Roberts S.A."/>
            <person name="Heroux A."/>
            <person name="Cordes M.H."/>
        </authorList>
    </citation>
    <scope>X-RAY CRYSTALLOGRAPHY (1.35 ANGSTROMS)</scope>
    <scope>SUBUNIT</scope>
</reference>
<protein>
    <recommendedName>
        <fullName>Regulatory protein cro</fullName>
    </recommendedName>
</protein>
<feature type="chain" id="PRO_0000077579" description="Regulatory protein cro">
    <location>
        <begin position="1"/>
        <end position="66"/>
    </location>
</feature>
<feature type="DNA-binding region" description="H-T-H motif">
    <location>
        <begin position="16"/>
        <end position="35"/>
    </location>
</feature>
<feature type="mutagenesis site" description="Loss of dimerization; when associated with D-58." evidence="3">
    <original>A</original>
    <variation>W</variation>
    <location>
        <position position="33"/>
    </location>
</feature>
<feature type="mutagenesis site" description="Loss of dimerization; when associated with W-33." evidence="3">
    <original>F</original>
    <variation>D</variation>
    <location>
        <position position="58"/>
    </location>
</feature>
<feature type="strand" evidence="10">
    <location>
        <begin position="3"/>
        <end position="6"/>
    </location>
</feature>
<feature type="helix" evidence="11">
    <location>
        <begin position="7"/>
        <end position="14"/>
    </location>
</feature>
<feature type="helix" evidence="11">
    <location>
        <begin position="16"/>
        <end position="23"/>
    </location>
</feature>
<feature type="helix" evidence="11">
    <location>
        <begin position="27"/>
        <end position="36"/>
    </location>
</feature>
<feature type="strand" evidence="11">
    <location>
        <begin position="39"/>
        <end position="44"/>
    </location>
</feature>
<feature type="turn" evidence="12">
    <location>
        <begin position="46"/>
        <end position="48"/>
    </location>
</feature>
<feature type="strand" evidence="11">
    <location>
        <begin position="50"/>
        <end position="55"/>
    </location>
</feature>
<feature type="strand" evidence="12">
    <location>
        <begin position="57"/>
        <end position="59"/>
    </location>
</feature>
<name>RCRO_LAMBD</name>